<name>DADA_SHIF8</name>
<keyword id="KW-0274">FAD</keyword>
<keyword id="KW-0285">Flavoprotein</keyword>
<keyword id="KW-0560">Oxidoreductase</keyword>
<dbReference type="EC" id="1.4.99.-" evidence="1"/>
<dbReference type="EMBL" id="CP000266">
    <property type="protein sequence ID" value="ABF03403.1"/>
    <property type="molecule type" value="Genomic_DNA"/>
</dbReference>
<dbReference type="RefSeq" id="WP_001266897.1">
    <property type="nucleotide sequence ID" value="NC_008258.1"/>
</dbReference>
<dbReference type="SMR" id="Q0T5L2"/>
<dbReference type="KEGG" id="sfv:SFV_1196"/>
<dbReference type="HOGENOM" id="CLU_007884_9_2_6"/>
<dbReference type="UniPathway" id="UPA00043">
    <property type="reaction ID" value="UER00498"/>
</dbReference>
<dbReference type="Proteomes" id="UP000000659">
    <property type="component" value="Chromosome"/>
</dbReference>
<dbReference type="GO" id="GO:0005737">
    <property type="term" value="C:cytoplasm"/>
    <property type="evidence" value="ECO:0007669"/>
    <property type="project" value="TreeGrafter"/>
</dbReference>
<dbReference type="GO" id="GO:0005886">
    <property type="term" value="C:plasma membrane"/>
    <property type="evidence" value="ECO:0007669"/>
    <property type="project" value="TreeGrafter"/>
</dbReference>
<dbReference type="GO" id="GO:0008718">
    <property type="term" value="F:D-amino-acid dehydrogenase activity"/>
    <property type="evidence" value="ECO:0007669"/>
    <property type="project" value="UniProtKB-UniRule"/>
</dbReference>
<dbReference type="GO" id="GO:0055130">
    <property type="term" value="P:D-alanine catabolic process"/>
    <property type="evidence" value="ECO:0007669"/>
    <property type="project" value="UniProtKB-UniPathway"/>
</dbReference>
<dbReference type="FunFam" id="3.50.50.60:FF:000020">
    <property type="entry name" value="D-amino acid dehydrogenase"/>
    <property type="match status" value="1"/>
</dbReference>
<dbReference type="Gene3D" id="3.30.9.10">
    <property type="entry name" value="D-Amino Acid Oxidase, subunit A, domain 2"/>
    <property type="match status" value="1"/>
</dbReference>
<dbReference type="Gene3D" id="3.50.50.60">
    <property type="entry name" value="FAD/NAD(P)-binding domain"/>
    <property type="match status" value="2"/>
</dbReference>
<dbReference type="HAMAP" id="MF_01202">
    <property type="entry name" value="DadA"/>
    <property type="match status" value="1"/>
</dbReference>
<dbReference type="InterPro" id="IPR023080">
    <property type="entry name" value="DadA"/>
</dbReference>
<dbReference type="InterPro" id="IPR006076">
    <property type="entry name" value="FAD-dep_OxRdtase"/>
</dbReference>
<dbReference type="InterPro" id="IPR036188">
    <property type="entry name" value="FAD/NAD-bd_sf"/>
</dbReference>
<dbReference type="NCBIfam" id="NF001933">
    <property type="entry name" value="PRK00711.1"/>
    <property type="match status" value="1"/>
</dbReference>
<dbReference type="PANTHER" id="PTHR13847:SF280">
    <property type="entry name" value="D-AMINO ACID DEHYDROGENASE"/>
    <property type="match status" value="1"/>
</dbReference>
<dbReference type="PANTHER" id="PTHR13847">
    <property type="entry name" value="SARCOSINE DEHYDROGENASE-RELATED"/>
    <property type="match status" value="1"/>
</dbReference>
<dbReference type="Pfam" id="PF01266">
    <property type="entry name" value="DAO"/>
    <property type="match status" value="1"/>
</dbReference>
<dbReference type="SUPFAM" id="SSF54373">
    <property type="entry name" value="FAD-linked reductases, C-terminal domain"/>
    <property type="match status" value="1"/>
</dbReference>
<dbReference type="SUPFAM" id="SSF51905">
    <property type="entry name" value="FAD/NAD(P)-binding domain"/>
    <property type="match status" value="1"/>
</dbReference>
<evidence type="ECO:0000255" key="1">
    <source>
        <dbReference type="HAMAP-Rule" id="MF_01202"/>
    </source>
</evidence>
<sequence>MRVVILGSGVVGVASAWYLNQAGHEVTVIDREPGAALETSAANAGQISPGYAAPWAAPGVPLKAIKWMFQRHAPLAVRLDGTQFQLKWMWQMLRNCDTSHYMENKGRMVRLAEYSRDCLKALRAETNIQYEGRQGGTLQLFRTEQQYENATRDIAVLEDAGVPYQLLESSRLAEVDPALAEVAHKLTGGLQLPNDETGDCQLFTQNLARMAEQAGVKFRFNTPVDQLLCDGEQIYGVKFGDEVIKADAYVMAFGSYSTAMLKGIVDIPVYPLKGYSLTIPIAQEDGAPVSTILDETYKIAITRFDNRIRVGGMAEIVGFNTELLQPRRETLEMVVRDLYPRGGHVEQATFWTGLRPMTPDGTPVVGSTRFKNLWLNTGHGTLGWTMACGSGQLLSDLLSGRTPAIPYEDLSVARYSRGFTPSRPGHLHGAHS</sequence>
<accession>Q0T5L2</accession>
<protein>
    <recommendedName>
        <fullName evidence="1">D-amino acid dehydrogenase</fullName>
        <ecNumber evidence="1">1.4.99.-</ecNumber>
    </recommendedName>
</protein>
<proteinExistence type="inferred from homology"/>
<reference key="1">
    <citation type="journal article" date="2006" name="BMC Genomics">
        <title>Complete genome sequence of Shigella flexneri 5b and comparison with Shigella flexneri 2a.</title>
        <authorList>
            <person name="Nie H."/>
            <person name="Yang F."/>
            <person name="Zhang X."/>
            <person name="Yang J."/>
            <person name="Chen L."/>
            <person name="Wang J."/>
            <person name="Xiong Z."/>
            <person name="Peng J."/>
            <person name="Sun L."/>
            <person name="Dong J."/>
            <person name="Xue Y."/>
            <person name="Xu X."/>
            <person name="Chen S."/>
            <person name="Yao Z."/>
            <person name="Shen Y."/>
            <person name="Jin Q."/>
        </authorList>
    </citation>
    <scope>NUCLEOTIDE SEQUENCE [LARGE SCALE GENOMIC DNA]</scope>
    <source>
        <strain>8401</strain>
    </source>
</reference>
<organism>
    <name type="scientific">Shigella flexneri serotype 5b (strain 8401)</name>
    <dbReference type="NCBI Taxonomy" id="373384"/>
    <lineage>
        <taxon>Bacteria</taxon>
        <taxon>Pseudomonadati</taxon>
        <taxon>Pseudomonadota</taxon>
        <taxon>Gammaproteobacteria</taxon>
        <taxon>Enterobacterales</taxon>
        <taxon>Enterobacteriaceae</taxon>
        <taxon>Shigella</taxon>
    </lineage>
</organism>
<feature type="chain" id="PRO_1000066118" description="D-amino acid dehydrogenase">
    <location>
        <begin position="1"/>
        <end position="432"/>
    </location>
</feature>
<feature type="binding site" evidence="1">
    <location>
        <begin position="3"/>
        <end position="17"/>
    </location>
    <ligand>
        <name>FAD</name>
        <dbReference type="ChEBI" id="CHEBI:57692"/>
    </ligand>
</feature>
<comment type="function">
    <text evidence="1">Oxidative deamination of D-amino acids.</text>
</comment>
<comment type="catalytic activity">
    <reaction evidence="1">
        <text>a D-alpha-amino acid + A + H2O = a 2-oxocarboxylate + AH2 + NH4(+)</text>
        <dbReference type="Rhea" id="RHEA:18125"/>
        <dbReference type="ChEBI" id="CHEBI:13193"/>
        <dbReference type="ChEBI" id="CHEBI:15377"/>
        <dbReference type="ChEBI" id="CHEBI:17499"/>
        <dbReference type="ChEBI" id="CHEBI:28938"/>
        <dbReference type="ChEBI" id="CHEBI:35179"/>
        <dbReference type="ChEBI" id="CHEBI:59871"/>
    </reaction>
</comment>
<comment type="cofactor">
    <cofactor evidence="1">
        <name>FAD</name>
        <dbReference type="ChEBI" id="CHEBI:57692"/>
    </cofactor>
</comment>
<comment type="pathway">
    <text>Amino-acid degradation; D-alanine degradation; NH(3) and pyruvate from D-alanine: step 1/1.</text>
</comment>
<comment type="similarity">
    <text evidence="1">Belongs to the DadA oxidoreductase family.</text>
</comment>
<gene>
    <name evidence="1" type="primary">dadA</name>
    <name type="ordered locus">SFV_1196</name>
</gene>